<proteinExistence type="inferred from homology"/>
<dbReference type="EMBL" id="AE016853">
    <property type="protein sequence ID" value="AAO54177.1"/>
    <property type="molecule type" value="Genomic_DNA"/>
</dbReference>
<dbReference type="RefSeq" id="NP_790482.1">
    <property type="nucleotide sequence ID" value="NC_004578.1"/>
</dbReference>
<dbReference type="RefSeq" id="WP_002555480.1">
    <property type="nucleotide sequence ID" value="NC_004578.1"/>
</dbReference>
<dbReference type="SMR" id="Q889W2"/>
<dbReference type="STRING" id="223283.PSPTO_0635"/>
<dbReference type="GeneID" id="96221021"/>
<dbReference type="KEGG" id="pst:PSPTO_0635"/>
<dbReference type="PATRIC" id="fig|223283.9.peg.641"/>
<dbReference type="eggNOG" id="COG0186">
    <property type="taxonomic scope" value="Bacteria"/>
</dbReference>
<dbReference type="HOGENOM" id="CLU_073626_1_1_6"/>
<dbReference type="OrthoDB" id="9811714at2"/>
<dbReference type="PhylomeDB" id="Q889W2"/>
<dbReference type="Proteomes" id="UP000002515">
    <property type="component" value="Chromosome"/>
</dbReference>
<dbReference type="GO" id="GO:0022627">
    <property type="term" value="C:cytosolic small ribosomal subunit"/>
    <property type="evidence" value="ECO:0007669"/>
    <property type="project" value="TreeGrafter"/>
</dbReference>
<dbReference type="GO" id="GO:0019843">
    <property type="term" value="F:rRNA binding"/>
    <property type="evidence" value="ECO:0007669"/>
    <property type="project" value="UniProtKB-UniRule"/>
</dbReference>
<dbReference type="GO" id="GO:0003735">
    <property type="term" value="F:structural constituent of ribosome"/>
    <property type="evidence" value="ECO:0007669"/>
    <property type="project" value="InterPro"/>
</dbReference>
<dbReference type="GO" id="GO:0006412">
    <property type="term" value="P:translation"/>
    <property type="evidence" value="ECO:0007669"/>
    <property type="project" value="UniProtKB-UniRule"/>
</dbReference>
<dbReference type="CDD" id="cd00364">
    <property type="entry name" value="Ribosomal_uS17"/>
    <property type="match status" value="1"/>
</dbReference>
<dbReference type="FunFam" id="2.40.50.140:FF:000014">
    <property type="entry name" value="30S ribosomal protein S17"/>
    <property type="match status" value="1"/>
</dbReference>
<dbReference type="Gene3D" id="2.40.50.140">
    <property type="entry name" value="Nucleic acid-binding proteins"/>
    <property type="match status" value="1"/>
</dbReference>
<dbReference type="HAMAP" id="MF_01345_B">
    <property type="entry name" value="Ribosomal_uS17_B"/>
    <property type="match status" value="1"/>
</dbReference>
<dbReference type="InterPro" id="IPR012340">
    <property type="entry name" value="NA-bd_OB-fold"/>
</dbReference>
<dbReference type="InterPro" id="IPR000266">
    <property type="entry name" value="Ribosomal_uS17"/>
</dbReference>
<dbReference type="InterPro" id="IPR019984">
    <property type="entry name" value="Ribosomal_uS17_bact/chlr"/>
</dbReference>
<dbReference type="NCBIfam" id="NF004123">
    <property type="entry name" value="PRK05610.1"/>
    <property type="match status" value="1"/>
</dbReference>
<dbReference type="NCBIfam" id="TIGR03635">
    <property type="entry name" value="uS17_bact"/>
    <property type="match status" value="1"/>
</dbReference>
<dbReference type="PANTHER" id="PTHR10744">
    <property type="entry name" value="40S RIBOSOMAL PROTEIN S11 FAMILY MEMBER"/>
    <property type="match status" value="1"/>
</dbReference>
<dbReference type="PANTHER" id="PTHR10744:SF1">
    <property type="entry name" value="SMALL RIBOSOMAL SUBUNIT PROTEIN US17M"/>
    <property type="match status" value="1"/>
</dbReference>
<dbReference type="Pfam" id="PF00366">
    <property type="entry name" value="Ribosomal_S17"/>
    <property type="match status" value="1"/>
</dbReference>
<dbReference type="PRINTS" id="PR00973">
    <property type="entry name" value="RIBOSOMALS17"/>
</dbReference>
<dbReference type="SUPFAM" id="SSF50249">
    <property type="entry name" value="Nucleic acid-binding proteins"/>
    <property type="match status" value="1"/>
</dbReference>
<evidence type="ECO:0000255" key="1">
    <source>
        <dbReference type="HAMAP-Rule" id="MF_01345"/>
    </source>
</evidence>
<evidence type="ECO:0000305" key="2"/>
<keyword id="KW-1185">Reference proteome</keyword>
<keyword id="KW-0687">Ribonucleoprotein</keyword>
<keyword id="KW-0689">Ribosomal protein</keyword>
<keyword id="KW-0694">RNA-binding</keyword>
<keyword id="KW-0699">rRNA-binding</keyword>
<gene>
    <name evidence="1" type="primary">rpsQ</name>
    <name type="ordered locus">PSPTO_0635</name>
</gene>
<name>RS17_PSESM</name>
<feature type="chain" id="PRO_0000233548" description="Small ribosomal subunit protein uS17">
    <location>
        <begin position="1"/>
        <end position="88"/>
    </location>
</feature>
<organism>
    <name type="scientific">Pseudomonas syringae pv. tomato (strain ATCC BAA-871 / DC3000)</name>
    <dbReference type="NCBI Taxonomy" id="223283"/>
    <lineage>
        <taxon>Bacteria</taxon>
        <taxon>Pseudomonadati</taxon>
        <taxon>Pseudomonadota</taxon>
        <taxon>Gammaproteobacteria</taxon>
        <taxon>Pseudomonadales</taxon>
        <taxon>Pseudomonadaceae</taxon>
        <taxon>Pseudomonas</taxon>
    </lineage>
</organism>
<reference key="1">
    <citation type="journal article" date="2003" name="Proc. Natl. Acad. Sci. U.S.A.">
        <title>The complete genome sequence of the Arabidopsis and tomato pathogen Pseudomonas syringae pv. tomato DC3000.</title>
        <authorList>
            <person name="Buell C.R."/>
            <person name="Joardar V."/>
            <person name="Lindeberg M."/>
            <person name="Selengut J."/>
            <person name="Paulsen I.T."/>
            <person name="Gwinn M.L."/>
            <person name="Dodson R.J."/>
            <person name="DeBoy R.T."/>
            <person name="Durkin A.S."/>
            <person name="Kolonay J.F."/>
            <person name="Madupu R."/>
            <person name="Daugherty S.C."/>
            <person name="Brinkac L.M."/>
            <person name="Beanan M.J."/>
            <person name="Haft D.H."/>
            <person name="Nelson W.C."/>
            <person name="Davidsen T.M."/>
            <person name="Zafar N."/>
            <person name="Zhou L."/>
            <person name="Liu J."/>
            <person name="Yuan Q."/>
            <person name="Khouri H.M."/>
            <person name="Fedorova N.B."/>
            <person name="Tran B."/>
            <person name="Russell D."/>
            <person name="Berry K.J."/>
            <person name="Utterback T.R."/>
            <person name="Van Aken S.E."/>
            <person name="Feldblyum T.V."/>
            <person name="D'Ascenzo M."/>
            <person name="Deng W.-L."/>
            <person name="Ramos A.R."/>
            <person name="Alfano J.R."/>
            <person name="Cartinhour S."/>
            <person name="Chatterjee A.K."/>
            <person name="Delaney T.P."/>
            <person name="Lazarowitz S.G."/>
            <person name="Martin G.B."/>
            <person name="Schneider D.J."/>
            <person name="Tang X."/>
            <person name="Bender C.L."/>
            <person name="White O."/>
            <person name="Fraser C.M."/>
            <person name="Collmer A."/>
        </authorList>
    </citation>
    <scope>NUCLEOTIDE SEQUENCE [LARGE SCALE GENOMIC DNA]</scope>
    <source>
        <strain>ATCC BAA-871 / DC3000</strain>
    </source>
</reference>
<sequence length="88" mass="10097">MAEAEKTVRTLTGRVVSDKMDKTITVLIERRVKHPIYGKYVKRSTKLHAHDETNQCHIGDKVTIRETRPVAKTKSWALVDILERAVEV</sequence>
<comment type="function">
    <text evidence="1">One of the primary rRNA binding proteins, it binds specifically to the 5'-end of 16S ribosomal RNA.</text>
</comment>
<comment type="subunit">
    <text evidence="1">Part of the 30S ribosomal subunit.</text>
</comment>
<comment type="similarity">
    <text evidence="1">Belongs to the universal ribosomal protein uS17 family.</text>
</comment>
<accession>Q889W2</accession>
<protein>
    <recommendedName>
        <fullName evidence="1">Small ribosomal subunit protein uS17</fullName>
    </recommendedName>
    <alternativeName>
        <fullName evidence="2">30S ribosomal protein S17</fullName>
    </alternativeName>
</protein>